<dbReference type="EC" id="6.1.1.20" evidence="1"/>
<dbReference type="EMBL" id="AE016879">
    <property type="protein sequence ID" value="AAP28493.1"/>
    <property type="molecule type" value="Genomic_DNA"/>
</dbReference>
<dbReference type="EMBL" id="AE017334">
    <property type="protein sequence ID" value="AAT33924.1"/>
    <property type="molecule type" value="Genomic_DNA"/>
</dbReference>
<dbReference type="EMBL" id="AE017225">
    <property type="protein sequence ID" value="AAT56754.1"/>
    <property type="molecule type" value="Genomic_DNA"/>
</dbReference>
<dbReference type="RefSeq" id="NP_847007.1">
    <property type="nucleotide sequence ID" value="NC_003997.3"/>
</dbReference>
<dbReference type="RefSeq" id="WP_000388219.1">
    <property type="nucleotide sequence ID" value="NZ_WXXJ01000026.1"/>
</dbReference>
<dbReference type="RefSeq" id="YP_030703.1">
    <property type="nucleotide sequence ID" value="NC_005945.1"/>
</dbReference>
<dbReference type="SMR" id="Q81L30"/>
<dbReference type="IntAct" id="Q81L30">
    <property type="interactions" value="1"/>
</dbReference>
<dbReference type="STRING" id="261594.GBAA_4804"/>
<dbReference type="DNASU" id="1083929"/>
<dbReference type="GeneID" id="83638271"/>
<dbReference type="KEGG" id="ban:BA_4804"/>
<dbReference type="KEGG" id="bar:GBAA_4804"/>
<dbReference type="KEGG" id="bat:BAS4456"/>
<dbReference type="PATRIC" id="fig|198094.11.peg.4765"/>
<dbReference type="eggNOG" id="COG0016">
    <property type="taxonomic scope" value="Bacteria"/>
</dbReference>
<dbReference type="HOGENOM" id="CLU_025086_0_1_9"/>
<dbReference type="OMA" id="EIMGCGM"/>
<dbReference type="OrthoDB" id="9800719at2"/>
<dbReference type="Proteomes" id="UP000000427">
    <property type="component" value="Chromosome"/>
</dbReference>
<dbReference type="Proteomes" id="UP000000594">
    <property type="component" value="Chromosome"/>
</dbReference>
<dbReference type="GO" id="GO:0005737">
    <property type="term" value="C:cytoplasm"/>
    <property type="evidence" value="ECO:0007669"/>
    <property type="project" value="UniProtKB-SubCell"/>
</dbReference>
<dbReference type="GO" id="GO:0005524">
    <property type="term" value="F:ATP binding"/>
    <property type="evidence" value="ECO:0007669"/>
    <property type="project" value="UniProtKB-UniRule"/>
</dbReference>
<dbReference type="GO" id="GO:0140096">
    <property type="term" value="F:catalytic activity, acting on a protein"/>
    <property type="evidence" value="ECO:0007669"/>
    <property type="project" value="UniProtKB-ARBA"/>
</dbReference>
<dbReference type="GO" id="GO:0000287">
    <property type="term" value="F:magnesium ion binding"/>
    <property type="evidence" value="ECO:0007669"/>
    <property type="project" value="UniProtKB-UniRule"/>
</dbReference>
<dbReference type="GO" id="GO:0004826">
    <property type="term" value="F:phenylalanine-tRNA ligase activity"/>
    <property type="evidence" value="ECO:0007669"/>
    <property type="project" value="UniProtKB-UniRule"/>
</dbReference>
<dbReference type="GO" id="GO:0016740">
    <property type="term" value="F:transferase activity"/>
    <property type="evidence" value="ECO:0007669"/>
    <property type="project" value="UniProtKB-ARBA"/>
</dbReference>
<dbReference type="GO" id="GO:0000049">
    <property type="term" value="F:tRNA binding"/>
    <property type="evidence" value="ECO:0007669"/>
    <property type="project" value="InterPro"/>
</dbReference>
<dbReference type="GO" id="GO:0006432">
    <property type="term" value="P:phenylalanyl-tRNA aminoacylation"/>
    <property type="evidence" value="ECO:0007669"/>
    <property type="project" value="UniProtKB-UniRule"/>
</dbReference>
<dbReference type="CDD" id="cd00496">
    <property type="entry name" value="PheRS_alpha_core"/>
    <property type="match status" value="1"/>
</dbReference>
<dbReference type="FunFam" id="3.30.930.10:FF:000003">
    <property type="entry name" value="Phenylalanine--tRNA ligase alpha subunit"/>
    <property type="match status" value="1"/>
</dbReference>
<dbReference type="Gene3D" id="3.30.930.10">
    <property type="entry name" value="Bira Bifunctional Protein, Domain 2"/>
    <property type="match status" value="1"/>
</dbReference>
<dbReference type="HAMAP" id="MF_00281">
    <property type="entry name" value="Phe_tRNA_synth_alpha1"/>
    <property type="match status" value="1"/>
</dbReference>
<dbReference type="InterPro" id="IPR006195">
    <property type="entry name" value="aa-tRNA-synth_II"/>
</dbReference>
<dbReference type="InterPro" id="IPR045864">
    <property type="entry name" value="aa-tRNA-synth_II/BPL/LPL"/>
</dbReference>
<dbReference type="InterPro" id="IPR004529">
    <property type="entry name" value="Phe-tRNA-synth_IIc_asu"/>
</dbReference>
<dbReference type="InterPro" id="IPR004188">
    <property type="entry name" value="Phe-tRNA_ligase_II_N"/>
</dbReference>
<dbReference type="InterPro" id="IPR022911">
    <property type="entry name" value="Phe_tRNA_ligase_alpha1_bac"/>
</dbReference>
<dbReference type="InterPro" id="IPR002319">
    <property type="entry name" value="Phenylalanyl-tRNA_Synthase"/>
</dbReference>
<dbReference type="InterPro" id="IPR010978">
    <property type="entry name" value="tRNA-bd_arm"/>
</dbReference>
<dbReference type="NCBIfam" id="TIGR00468">
    <property type="entry name" value="pheS"/>
    <property type="match status" value="1"/>
</dbReference>
<dbReference type="PANTHER" id="PTHR11538:SF41">
    <property type="entry name" value="PHENYLALANINE--TRNA LIGASE, MITOCHONDRIAL"/>
    <property type="match status" value="1"/>
</dbReference>
<dbReference type="PANTHER" id="PTHR11538">
    <property type="entry name" value="PHENYLALANYL-TRNA SYNTHETASE"/>
    <property type="match status" value="1"/>
</dbReference>
<dbReference type="Pfam" id="PF02912">
    <property type="entry name" value="Phe_tRNA-synt_N"/>
    <property type="match status" value="1"/>
</dbReference>
<dbReference type="Pfam" id="PF01409">
    <property type="entry name" value="tRNA-synt_2d"/>
    <property type="match status" value="1"/>
</dbReference>
<dbReference type="SUPFAM" id="SSF55681">
    <property type="entry name" value="Class II aaRS and biotin synthetases"/>
    <property type="match status" value="1"/>
</dbReference>
<dbReference type="SUPFAM" id="SSF46589">
    <property type="entry name" value="tRNA-binding arm"/>
    <property type="match status" value="1"/>
</dbReference>
<dbReference type="PROSITE" id="PS50862">
    <property type="entry name" value="AA_TRNA_LIGASE_II"/>
    <property type="match status" value="1"/>
</dbReference>
<name>SYFA_BACAN</name>
<feature type="chain" id="PRO_0000126658" description="Phenylalanine--tRNA ligase alpha subunit">
    <location>
        <begin position="1"/>
        <end position="344"/>
    </location>
</feature>
<feature type="binding site" evidence="1">
    <location>
        <position position="256"/>
    </location>
    <ligand>
        <name>Mg(2+)</name>
        <dbReference type="ChEBI" id="CHEBI:18420"/>
        <note>shared with beta subunit</note>
    </ligand>
</feature>
<evidence type="ECO:0000255" key="1">
    <source>
        <dbReference type="HAMAP-Rule" id="MF_00281"/>
    </source>
</evidence>
<gene>
    <name evidence="1" type="primary">pheS</name>
    <name type="ordered locus">BA_4804</name>
    <name type="ordered locus">GBAA_4804</name>
    <name type="ordered locus">BAS4456</name>
</gene>
<sequence>MEARLKELKQKALELIEEAKELKGLNDVRVAYLGKKGPITEVLRGMGKLSAEERPRMGALVNEVREAIQTRLDDKISNLEKAVIEAKLATETIDVTLPGRPVETGCHHPLTAVVEQIEDVFIGMGYEVAEGTEVEKDYYNFEALNLPKDHPARDMQDTFYITEETLLRTHTSSVQARTMENNKEKGPIKIICPGKVYRRDDDDATHSHQFMQIEGLVIDKNIRMSDLKGTLQVFVKKMFGEDREIRLRPSFFPFTEPSVEMDISCMMCHGKGCGTCKGTGWIEILGAGMVHPNVLEMAGYDSKEYQGFAFGMGAERIAMLKYGVDDIRHFYTNDVRFLQQFKRA</sequence>
<proteinExistence type="inferred from homology"/>
<accession>Q81L30</accession>
<accession>Q6HSI5</accession>
<accession>Q6KLT0</accession>
<organism>
    <name type="scientific">Bacillus anthracis</name>
    <dbReference type="NCBI Taxonomy" id="1392"/>
    <lineage>
        <taxon>Bacteria</taxon>
        <taxon>Bacillati</taxon>
        <taxon>Bacillota</taxon>
        <taxon>Bacilli</taxon>
        <taxon>Bacillales</taxon>
        <taxon>Bacillaceae</taxon>
        <taxon>Bacillus</taxon>
        <taxon>Bacillus cereus group</taxon>
    </lineage>
</organism>
<protein>
    <recommendedName>
        <fullName evidence="1">Phenylalanine--tRNA ligase alpha subunit</fullName>
        <ecNumber evidence="1">6.1.1.20</ecNumber>
    </recommendedName>
    <alternativeName>
        <fullName evidence="1">Phenylalanyl-tRNA synthetase alpha subunit</fullName>
        <shortName evidence="1">PheRS</shortName>
    </alternativeName>
</protein>
<reference key="1">
    <citation type="journal article" date="2003" name="Nature">
        <title>The genome sequence of Bacillus anthracis Ames and comparison to closely related bacteria.</title>
        <authorList>
            <person name="Read T.D."/>
            <person name="Peterson S.N."/>
            <person name="Tourasse N.J."/>
            <person name="Baillie L.W."/>
            <person name="Paulsen I.T."/>
            <person name="Nelson K.E."/>
            <person name="Tettelin H."/>
            <person name="Fouts D.E."/>
            <person name="Eisen J.A."/>
            <person name="Gill S.R."/>
            <person name="Holtzapple E.K."/>
            <person name="Okstad O.A."/>
            <person name="Helgason E."/>
            <person name="Rilstone J."/>
            <person name="Wu M."/>
            <person name="Kolonay J.F."/>
            <person name="Beanan M.J."/>
            <person name="Dodson R.J."/>
            <person name="Brinkac L.M."/>
            <person name="Gwinn M.L."/>
            <person name="DeBoy R.T."/>
            <person name="Madpu R."/>
            <person name="Daugherty S.C."/>
            <person name="Durkin A.S."/>
            <person name="Haft D.H."/>
            <person name="Nelson W.C."/>
            <person name="Peterson J.D."/>
            <person name="Pop M."/>
            <person name="Khouri H.M."/>
            <person name="Radune D."/>
            <person name="Benton J.L."/>
            <person name="Mahamoud Y."/>
            <person name="Jiang L."/>
            <person name="Hance I.R."/>
            <person name="Weidman J.F."/>
            <person name="Berry K.J."/>
            <person name="Plaut R.D."/>
            <person name="Wolf A.M."/>
            <person name="Watkins K.L."/>
            <person name="Nierman W.C."/>
            <person name="Hazen A."/>
            <person name="Cline R.T."/>
            <person name="Redmond C."/>
            <person name="Thwaite J.E."/>
            <person name="White O."/>
            <person name="Salzberg S.L."/>
            <person name="Thomason B."/>
            <person name="Friedlander A.M."/>
            <person name="Koehler T.M."/>
            <person name="Hanna P.C."/>
            <person name="Kolstoe A.-B."/>
            <person name="Fraser C.M."/>
        </authorList>
    </citation>
    <scope>NUCLEOTIDE SEQUENCE [LARGE SCALE GENOMIC DNA]</scope>
    <source>
        <strain>Ames / isolate Porton</strain>
    </source>
</reference>
<reference key="2">
    <citation type="journal article" date="2009" name="J. Bacteriol.">
        <title>The complete genome sequence of Bacillus anthracis Ames 'Ancestor'.</title>
        <authorList>
            <person name="Ravel J."/>
            <person name="Jiang L."/>
            <person name="Stanley S.T."/>
            <person name="Wilson M.R."/>
            <person name="Decker R.S."/>
            <person name="Read T.D."/>
            <person name="Worsham P."/>
            <person name="Keim P.S."/>
            <person name="Salzberg S.L."/>
            <person name="Fraser-Liggett C.M."/>
            <person name="Rasko D.A."/>
        </authorList>
    </citation>
    <scope>NUCLEOTIDE SEQUENCE [LARGE SCALE GENOMIC DNA]</scope>
    <source>
        <strain>Ames ancestor</strain>
    </source>
</reference>
<reference key="3">
    <citation type="submission" date="2004-01" db="EMBL/GenBank/DDBJ databases">
        <title>Complete genome sequence of Bacillus anthracis Sterne.</title>
        <authorList>
            <person name="Brettin T.S."/>
            <person name="Bruce D."/>
            <person name="Challacombe J.F."/>
            <person name="Gilna P."/>
            <person name="Han C."/>
            <person name="Hill K."/>
            <person name="Hitchcock P."/>
            <person name="Jackson P."/>
            <person name="Keim P."/>
            <person name="Longmire J."/>
            <person name="Lucas S."/>
            <person name="Okinaka R."/>
            <person name="Richardson P."/>
            <person name="Rubin E."/>
            <person name="Tice H."/>
        </authorList>
    </citation>
    <scope>NUCLEOTIDE SEQUENCE [LARGE SCALE GENOMIC DNA]</scope>
    <source>
        <strain>Sterne</strain>
    </source>
</reference>
<keyword id="KW-0030">Aminoacyl-tRNA synthetase</keyword>
<keyword id="KW-0067">ATP-binding</keyword>
<keyword id="KW-0963">Cytoplasm</keyword>
<keyword id="KW-0436">Ligase</keyword>
<keyword id="KW-0460">Magnesium</keyword>
<keyword id="KW-0479">Metal-binding</keyword>
<keyword id="KW-0547">Nucleotide-binding</keyword>
<keyword id="KW-0648">Protein biosynthesis</keyword>
<keyword id="KW-1185">Reference proteome</keyword>
<comment type="catalytic activity">
    <reaction evidence="1">
        <text>tRNA(Phe) + L-phenylalanine + ATP = L-phenylalanyl-tRNA(Phe) + AMP + diphosphate + H(+)</text>
        <dbReference type="Rhea" id="RHEA:19413"/>
        <dbReference type="Rhea" id="RHEA-COMP:9668"/>
        <dbReference type="Rhea" id="RHEA-COMP:9699"/>
        <dbReference type="ChEBI" id="CHEBI:15378"/>
        <dbReference type="ChEBI" id="CHEBI:30616"/>
        <dbReference type="ChEBI" id="CHEBI:33019"/>
        <dbReference type="ChEBI" id="CHEBI:58095"/>
        <dbReference type="ChEBI" id="CHEBI:78442"/>
        <dbReference type="ChEBI" id="CHEBI:78531"/>
        <dbReference type="ChEBI" id="CHEBI:456215"/>
        <dbReference type="EC" id="6.1.1.20"/>
    </reaction>
</comment>
<comment type="cofactor">
    <cofactor evidence="1">
        <name>Mg(2+)</name>
        <dbReference type="ChEBI" id="CHEBI:18420"/>
    </cofactor>
    <text evidence="1">Binds 2 magnesium ions per tetramer.</text>
</comment>
<comment type="subunit">
    <text evidence="1">Tetramer of two alpha and two beta subunits.</text>
</comment>
<comment type="subcellular location">
    <subcellularLocation>
        <location evidence="1">Cytoplasm</location>
    </subcellularLocation>
</comment>
<comment type="similarity">
    <text evidence="1">Belongs to the class-II aminoacyl-tRNA synthetase family. Phe-tRNA synthetase alpha subunit type 1 subfamily.</text>
</comment>